<sequence>MKSPAPSRPQKMALIPACIFLCFAALSVQAEETSVTPQPPDILLGPLFNDVQNAKLFPDQKTFADAVPNSDPLMILADYRMQQNQSGFDLRHFVNVNFTLPKEGEKYVPPEGQSLREHIDGLWPVLTRSTENTEKWDSLLPLPKPYVVPGGRFREVYYWDSYFTMLGLAESGHWDKVADMVANFAHEIDTYGHIPNGNRSYYLSRSQPPFFALMVELLAQHEGDAALKQYLPQMQKEYAYWMDGVENLQAGQQEKRVVKLQDGTLLNRYWDDRDTPRPESWVEDIATAKSNPNRPATEIYRDLRSAAASGWDFSSRWMDNPQQLNTLRTTSIVPVDLNSLMFKMEKILARASKAAGDNAMANQYETLANARQKGIEKYLWNDQQGWYADYDLKSHKVRNQLTAAALFPLYVNAAAKDRASKMATATKTHLLQPGGLNTTSVKSGQQWDAPNGWAPLQWVATEGLQNYGQKEVAMDISWHFLTNVQHTYDREKKLVEKYDVSATGTGGGGGEYPLQDGFGWTNGVTLKMLDLICPKEQPCDNVPATRPLSESTTQPVKQKEAEPTP</sequence>
<reference key="1">
    <citation type="journal article" date="2002" name="Proc. Natl. Acad. Sci. U.S.A.">
        <title>Extensive mosaic structure revealed by the complete genome sequence of uropathogenic Escherichia coli.</title>
        <authorList>
            <person name="Welch R.A."/>
            <person name="Burland V."/>
            <person name="Plunkett G. III"/>
            <person name="Redford P."/>
            <person name="Roesch P."/>
            <person name="Rasko D."/>
            <person name="Buckles E.L."/>
            <person name="Liou S.-R."/>
            <person name="Boutin A."/>
            <person name="Hackett J."/>
            <person name="Stroud D."/>
            <person name="Mayhew G.F."/>
            <person name="Rose D.J."/>
            <person name="Zhou S."/>
            <person name="Schwartz D.C."/>
            <person name="Perna N.T."/>
            <person name="Mobley H.L.T."/>
            <person name="Donnenberg M.S."/>
            <person name="Blattner F.R."/>
        </authorList>
    </citation>
    <scope>NUCLEOTIDE SEQUENCE [LARGE SCALE GENOMIC DNA]</scope>
    <source>
        <strain>CFT073 / ATCC 700928 / UPEC</strain>
    </source>
</reference>
<comment type="function">
    <text evidence="1">Provides the cells with the ability to utilize trehalose at high osmolarity by splitting it into glucose molecules that can subsequently be taken up by the phosphotransferase-mediated uptake system.</text>
</comment>
<comment type="catalytic activity">
    <reaction evidence="1">
        <text>alpha,alpha-trehalose + H2O = alpha-D-glucose + beta-D-glucose</text>
        <dbReference type="Rhea" id="RHEA:32675"/>
        <dbReference type="ChEBI" id="CHEBI:15377"/>
        <dbReference type="ChEBI" id="CHEBI:15903"/>
        <dbReference type="ChEBI" id="CHEBI:16551"/>
        <dbReference type="ChEBI" id="CHEBI:17925"/>
        <dbReference type="EC" id="3.2.1.28"/>
    </reaction>
</comment>
<comment type="subunit">
    <text evidence="1">Monomer.</text>
</comment>
<comment type="subcellular location">
    <subcellularLocation>
        <location evidence="1">Periplasm</location>
    </subcellularLocation>
</comment>
<comment type="similarity">
    <text evidence="1">Belongs to the glycosyl hydrolase 37 family.</text>
</comment>
<gene>
    <name evidence="1" type="primary">treA</name>
    <name type="ordered locus">c1654</name>
</gene>
<keyword id="KW-0326">Glycosidase</keyword>
<keyword id="KW-0378">Hydrolase</keyword>
<keyword id="KW-0574">Periplasm</keyword>
<keyword id="KW-1185">Reference proteome</keyword>
<keyword id="KW-0732">Signal</keyword>
<proteinExistence type="inferred from homology"/>
<evidence type="ECO:0000255" key="1">
    <source>
        <dbReference type="HAMAP-Rule" id="MF_01060"/>
    </source>
</evidence>
<evidence type="ECO:0000256" key="2">
    <source>
        <dbReference type="SAM" id="MobiDB-lite"/>
    </source>
</evidence>
<feature type="signal peptide" evidence="1">
    <location>
        <begin position="1"/>
        <end position="30"/>
    </location>
</feature>
<feature type="chain" id="PRO_0000012042" description="Periplasmic trehalase">
    <location>
        <begin position="31"/>
        <end position="565"/>
    </location>
</feature>
<feature type="region of interest" description="Disordered" evidence="2">
    <location>
        <begin position="539"/>
        <end position="565"/>
    </location>
</feature>
<feature type="active site" description="Proton donor/acceptor" evidence="1">
    <location>
        <position position="312"/>
    </location>
</feature>
<feature type="active site" description="Proton donor/acceptor" evidence="1">
    <location>
        <position position="496"/>
    </location>
</feature>
<feature type="binding site" evidence="1">
    <location>
        <position position="152"/>
    </location>
    <ligand>
        <name>substrate</name>
    </ligand>
</feature>
<feature type="binding site" evidence="1">
    <location>
        <begin position="159"/>
        <end position="160"/>
    </location>
    <ligand>
        <name>substrate</name>
    </ligand>
</feature>
<feature type="binding site" evidence="1">
    <location>
        <position position="196"/>
    </location>
    <ligand>
        <name>substrate</name>
    </ligand>
</feature>
<feature type="binding site" evidence="1">
    <location>
        <begin position="205"/>
        <end position="207"/>
    </location>
    <ligand>
        <name>substrate</name>
    </ligand>
</feature>
<feature type="binding site" evidence="1">
    <location>
        <begin position="277"/>
        <end position="279"/>
    </location>
    <ligand>
        <name>substrate</name>
    </ligand>
</feature>
<feature type="binding site" evidence="1">
    <location>
        <position position="310"/>
    </location>
    <ligand>
        <name>substrate</name>
    </ligand>
</feature>
<feature type="binding site" evidence="1">
    <location>
        <position position="511"/>
    </location>
    <ligand>
        <name>substrate</name>
    </ligand>
</feature>
<accession>Q8CW46</accession>
<protein>
    <recommendedName>
        <fullName evidence="1">Periplasmic trehalase</fullName>
        <ecNumber evidence="1">3.2.1.28</ecNumber>
    </recommendedName>
    <alternativeName>
        <fullName evidence="1">Alpha,alpha-trehalase</fullName>
    </alternativeName>
    <alternativeName>
        <fullName evidence="1">Alpha,alpha-trehalose glucohydrolase</fullName>
    </alternativeName>
</protein>
<organism>
    <name type="scientific">Escherichia coli O6:H1 (strain CFT073 / ATCC 700928 / UPEC)</name>
    <dbReference type="NCBI Taxonomy" id="199310"/>
    <lineage>
        <taxon>Bacteria</taxon>
        <taxon>Pseudomonadati</taxon>
        <taxon>Pseudomonadota</taxon>
        <taxon>Gammaproteobacteria</taxon>
        <taxon>Enterobacterales</taxon>
        <taxon>Enterobacteriaceae</taxon>
        <taxon>Escherichia</taxon>
    </lineage>
</organism>
<dbReference type="EC" id="3.2.1.28" evidence="1"/>
<dbReference type="EMBL" id="AE014075">
    <property type="protein sequence ID" value="AAN80119.1"/>
    <property type="molecule type" value="Genomic_DNA"/>
</dbReference>
<dbReference type="RefSeq" id="WP_000841742.1">
    <property type="nucleotide sequence ID" value="NZ_CP051263.1"/>
</dbReference>
<dbReference type="SMR" id="Q8CW46"/>
<dbReference type="STRING" id="199310.c1654"/>
<dbReference type="CAZy" id="GH37">
    <property type="family name" value="Glycoside Hydrolase Family 37"/>
</dbReference>
<dbReference type="KEGG" id="ecc:c1654"/>
<dbReference type="eggNOG" id="COG1626">
    <property type="taxonomic scope" value="Bacteria"/>
</dbReference>
<dbReference type="HOGENOM" id="CLU_006451_3_1_6"/>
<dbReference type="BioCyc" id="ECOL199310:C1654-MONOMER"/>
<dbReference type="Proteomes" id="UP000001410">
    <property type="component" value="Chromosome"/>
</dbReference>
<dbReference type="GO" id="GO:0042597">
    <property type="term" value="C:periplasmic space"/>
    <property type="evidence" value="ECO:0007669"/>
    <property type="project" value="UniProtKB-SubCell"/>
</dbReference>
<dbReference type="GO" id="GO:0004555">
    <property type="term" value="F:alpha,alpha-trehalase activity"/>
    <property type="evidence" value="ECO:0007669"/>
    <property type="project" value="UniProtKB-UniRule"/>
</dbReference>
<dbReference type="GO" id="GO:0071474">
    <property type="term" value="P:cellular hyperosmotic response"/>
    <property type="evidence" value="ECO:0007669"/>
    <property type="project" value="InterPro"/>
</dbReference>
<dbReference type="GO" id="GO:0005993">
    <property type="term" value="P:trehalose catabolic process"/>
    <property type="evidence" value="ECO:0007669"/>
    <property type="project" value="InterPro"/>
</dbReference>
<dbReference type="FunFam" id="1.50.10.10:FF:000003">
    <property type="entry name" value="Cytoplasmic trehalase"/>
    <property type="match status" value="1"/>
</dbReference>
<dbReference type="Gene3D" id="1.50.10.10">
    <property type="match status" value="1"/>
</dbReference>
<dbReference type="HAMAP" id="MF_01060">
    <property type="entry name" value="Peripl_trehalase"/>
    <property type="match status" value="1"/>
</dbReference>
<dbReference type="InterPro" id="IPR008928">
    <property type="entry name" value="6-hairpin_glycosidase_sf"/>
</dbReference>
<dbReference type="InterPro" id="IPR012341">
    <property type="entry name" value="6hp_glycosidase-like_sf"/>
</dbReference>
<dbReference type="InterPro" id="IPR001661">
    <property type="entry name" value="Glyco_hydro_37"/>
</dbReference>
<dbReference type="InterPro" id="IPR018232">
    <property type="entry name" value="Glyco_hydro_37_CS"/>
</dbReference>
<dbReference type="InterPro" id="IPR023720">
    <property type="entry name" value="Trehalase_periplasmic"/>
</dbReference>
<dbReference type="NCBIfam" id="NF009773">
    <property type="entry name" value="PRK13270.1"/>
    <property type="match status" value="1"/>
</dbReference>
<dbReference type="NCBIfam" id="NF009774">
    <property type="entry name" value="PRK13271.1"/>
    <property type="match status" value="1"/>
</dbReference>
<dbReference type="PANTHER" id="PTHR23403">
    <property type="entry name" value="TREHALASE"/>
    <property type="match status" value="1"/>
</dbReference>
<dbReference type="PANTHER" id="PTHR23403:SF1">
    <property type="entry name" value="TREHALASE"/>
    <property type="match status" value="1"/>
</dbReference>
<dbReference type="Pfam" id="PF01204">
    <property type="entry name" value="Trehalase"/>
    <property type="match status" value="1"/>
</dbReference>
<dbReference type="PRINTS" id="PR00744">
    <property type="entry name" value="GLHYDRLASE37"/>
</dbReference>
<dbReference type="SUPFAM" id="SSF48208">
    <property type="entry name" value="Six-hairpin glycosidases"/>
    <property type="match status" value="1"/>
</dbReference>
<dbReference type="PROSITE" id="PS00927">
    <property type="entry name" value="TREHALASE_1"/>
    <property type="match status" value="1"/>
</dbReference>
<dbReference type="PROSITE" id="PS00928">
    <property type="entry name" value="TREHALASE_2"/>
    <property type="match status" value="1"/>
</dbReference>
<name>TREA_ECOL6</name>